<sequence length="361" mass="40858">MILDSTLREGEQTPGVNYSPEQRLRIALALDEIGVDFIEVGHPAVSKDVFIGIKLIASQDLNANLLAHSRALLEDIDYVIQADVEWVGIFFCLSNACLRKRFRMSLSQALERISKAIEYAKDHGLKVRFTPEDTTRTEWENLRRAIELAKELKVDRISVADTTGGTHPLRFYTLVKKVVNFGIPVNVHCHNDLGLALANAIMGIEGGATVVDATVNGLGERAGIVDLAQIVTVLYYHYGVKKYRLDKLYEISRMVSEITGIALQPNYPIVGENAFTHKAGLHVSAVLKDPRFYEFLPAEVFGRERTIYVDRFAGKDTIRYYLQKLGINDEEFVKVLLKRVKSSREPFTWDKFIEEVRRLKT</sequence>
<organism>
    <name type="scientific">Pyrococcus horikoshii (strain ATCC 700860 / DSM 12428 / JCM 9974 / NBRC 100139 / OT-3)</name>
    <dbReference type="NCBI Taxonomy" id="70601"/>
    <lineage>
        <taxon>Archaea</taxon>
        <taxon>Methanobacteriati</taxon>
        <taxon>Methanobacteriota</taxon>
        <taxon>Thermococci</taxon>
        <taxon>Thermococcales</taxon>
        <taxon>Thermococcaceae</taxon>
        <taxon>Pyrococcus</taxon>
    </lineage>
</organism>
<keyword id="KW-0028">Amino-acid biosynthesis</keyword>
<keyword id="KW-0457">Lysine biosynthesis</keyword>
<keyword id="KW-0460">Magnesium</keyword>
<keyword id="KW-0464">Manganese</keyword>
<keyword id="KW-0479">Metal-binding</keyword>
<keyword id="KW-0808">Transferase</keyword>
<comment type="function">
    <text evidence="1">Catalyzes the aldol-type condensation of 2-oxoglutarate with acetyl-CoA to yield homocitrate. Carries out the first step of the alpha-aminoadipate (AAA) lysine biosynthesis pathway.</text>
</comment>
<comment type="catalytic activity">
    <reaction evidence="1">
        <text>acetyl-CoA + 2-oxoglutarate + H2O = (2R)-homocitrate + CoA + H(+)</text>
        <dbReference type="Rhea" id="RHEA:12929"/>
        <dbReference type="ChEBI" id="CHEBI:15377"/>
        <dbReference type="ChEBI" id="CHEBI:15378"/>
        <dbReference type="ChEBI" id="CHEBI:16810"/>
        <dbReference type="ChEBI" id="CHEBI:57287"/>
        <dbReference type="ChEBI" id="CHEBI:57288"/>
        <dbReference type="ChEBI" id="CHEBI:58884"/>
        <dbReference type="EC" id="2.3.3.14"/>
    </reaction>
    <physiologicalReaction direction="left-to-right" evidence="1">
        <dbReference type="Rhea" id="RHEA:12930"/>
    </physiologicalReaction>
</comment>
<comment type="cofactor">
    <cofactor evidence="1">
        <name>Mg(2+)</name>
        <dbReference type="ChEBI" id="CHEBI:18420"/>
    </cofactor>
    <cofactor evidence="1">
        <name>Mn(2+)</name>
        <dbReference type="ChEBI" id="CHEBI:29035"/>
    </cofactor>
</comment>
<comment type="pathway">
    <text evidence="1">Amino-acid biosynthesis; L-lysine biosynthesis via AAA pathway; L-alpha-aminoadipate from 2-oxoglutarate: step 1/5.</text>
</comment>
<comment type="similarity">
    <text evidence="2">Belongs to the alpha-IPM synthase/homocitrate synthase family. Homocitrate synthase LYS20/LYS21 subfamily.</text>
</comment>
<proteinExistence type="inferred from homology"/>
<name>HOSA_PYRHO</name>
<evidence type="ECO:0000250" key="1">
    <source>
        <dbReference type="UniProtKB" id="O87198"/>
    </source>
</evidence>
<evidence type="ECO:0000255" key="2">
    <source>
        <dbReference type="HAMAP-Rule" id="MF_02222"/>
    </source>
</evidence>
<evidence type="ECO:0000255" key="3">
    <source>
        <dbReference type="PROSITE-ProRule" id="PRU01151"/>
    </source>
</evidence>
<gene>
    <name type="ordered locus">PH1727</name>
</gene>
<dbReference type="EC" id="2.3.3.14" evidence="1 2"/>
<dbReference type="EMBL" id="BA000001">
    <property type="protein sequence ID" value="BAA30841.1"/>
    <property type="molecule type" value="Genomic_DNA"/>
</dbReference>
<dbReference type="PIR" id="B71181">
    <property type="entry name" value="B71181"/>
</dbReference>
<dbReference type="RefSeq" id="WP_010885790.1">
    <property type="nucleotide sequence ID" value="NC_000961.1"/>
</dbReference>
<dbReference type="SMR" id="O59390"/>
<dbReference type="STRING" id="70601.gene:9378723"/>
<dbReference type="EnsemblBacteria" id="BAA30841">
    <property type="protein sequence ID" value="BAA30841"/>
    <property type="gene ID" value="BAA30841"/>
</dbReference>
<dbReference type="GeneID" id="1442571"/>
<dbReference type="KEGG" id="pho:PH1727"/>
<dbReference type="eggNOG" id="arCOG02092">
    <property type="taxonomic scope" value="Archaea"/>
</dbReference>
<dbReference type="OrthoDB" id="6555at2157"/>
<dbReference type="UniPathway" id="UPA00033">
    <property type="reaction ID" value="UER00028"/>
</dbReference>
<dbReference type="Proteomes" id="UP000000752">
    <property type="component" value="Chromosome"/>
</dbReference>
<dbReference type="GO" id="GO:0004410">
    <property type="term" value="F:homocitrate synthase activity"/>
    <property type="evidence" value="ECO:0007669"/>
    <property type="project" value="UniProtKB-UniRule"/>
</dbReference>
<dbReference type="GO" id="GO:0046872">
    <property type="term" value="F:metal ion binding"/>
    <property type="evidence" value="ECO:0007669"/>
    <property type="project" value="UniProtKB-KW"/>
</dbReference>
<dbReference type="GO" id="GO:0019878">
    <property type="term" value="P:lysine biosynthetic process via aminoadipic acid"/>
    <property type="evidence" value="ECO:0007669"/>
    <property type="project" value="UniProtKB-UniRule"/>
</dbReference>
<dbReference type="CDD" id="cd07940">
    <property type="entry name" value="DRE_TIM_IPMS"/>
    <property type="match status" value="1"/>
</dbReference>
<dbReference type="Gene3D" id="1.10.238.260">
    <property type="match status" value="1"/>
</dbReference>
<dbReference type="Gene3D" id="3.20.20.70">
    <property type="entry name" value="Aldolase class I"/>
    <property type="match status" value="1"/>
</dbReference>
<dbReference type="HAMAP" id="MF_02222">
    <property type="entry name" value="Homocitr_synth_fung_arch"/>
    <property type="match status" value="1"/>
</dbReference>
<dbReference type="InterPro" id="IPR002034">
    <property type="entry name" value="AIPM/Hcit_synth_CS"/>
</dbReference>
<dbReference type="InterPro" id="IPR013785">
    <property type="entry name" value="Aldolase_TIM"/>
</dbReference>
<dbReference type="InterPro" id="IPR011872">
    <property type="entry name" value="Homocitrate_synth"/>
</dbReference>
<dbReference type="InterPro" id="IPR054691">
    <property type="entry name" value="LeuA/HCS_post-cat"/>
</dbReference>
<dbReference type="InterPro" id="IPR000891">
    <property type="entry name" value="PYR_CT"/>
</dbReference>
<dbReference type="NCBIfam" id="TIGR02146">
    <property type="entry name" value="LysS_fung_arch"/>
    <property type="match status" value="1"/>
</dbReference>
<dbReference type="PANTHER" id="PTHR42880">
    <property type="entry name" value="HOMOCITRATE SYNTHASE"/>
    <property type="match status" value="1"/>
</dbReference>
<dbReference type="PANTHER" id="PTHR42880:SF1">
    <property type="entry name" value="ISOPROPYLMALATE_HOMOCITRATE_CITRAMALATE SYNTHASE FAMILY PROTEIN"/>
    <property type="match status" value="1"/>
</dbReference>
<dbReference type="Pfam" id="PF22617">
    <property type="entry name" value="HCS_D2"/>
    <property type="match status" value="1"/>
</dbReference>
<dbReference type="Pfam" id="PF00682">
    <property type="entry name" value="HMGL-like"/>
    <property type="match status" value="1"/>
</dbReference>
<dbReference type="SUPFAM" id="SSF51569">
    <property type="entry name" value="Aldolase"/>
    <property type="match status" value="1"/>
</dbReference>
<dbReference type="PROSITE" id="PS00816">
    <property type="entry name" value="AIPM_HOMOCIT_SYNTH_2"/>
    <property type="match status" value="1"/>
</dbReference>
<dbReference type="PROSITE" id="PS50991">
    <property type="entry name" value="PYR_CT"/>
    <property type="match status" value="1"/>
</dbReference>
<reference key="1">
    <citation type="journal article" date="1998" name="DNA Res.">
        <title>Complete sequence and gene organization of the genome of a hyper-thermophilic archaebacterium, Pyrococcus horikoshii OT3.</title>
        <authorList>
            <person name="Kawarabayasi Y."/>
            <person name="Sawada M."/>
            <person name="Horikawa H."/>
            <person name="Haikawa Y."/>
            <person name="Hino Y."/>
            <person name="Yamamoto S."/>
            <person name="Sekine M."/>
            <person name="Baba S."/>
            <person name="Kosugi H."/>
            <person name="Hosoyama A."/>
            <person name="Nagai Y."/>
            <person name="Sakai M."/>
            <person name="Ogura K."/>
            <person name="Otsuka R."/>
            <person name="Nakazawa H."/>
            <person name="Takamiya M."/>
            <person name="Ohfuku Y."/>
            <person name="Funahashi T."/>
            <person name="Tanaka T."/>
            <person name="Kudoh Y."/>
            <person name="Yamazaki J."/>
            <person name="Kushida N."/>
            <person name="Oguchi A."/>
            <person name="Aoki K."/>
            <person name="Yoshizawa T."/>
            <person name="Nakamura Y."/>
            <person name="Robb F.T."/>
            <person name="Horikoshi K."/>
            <person name="Masuchi Y."/>
            <person name="Shizuya H."/>
            <person name="Kikuchi H."/>
        </authorList>
    </citation>
    <scope>NUCLEOTIDE SEQUENCE [LARGE SCALE GENOMIC DNA]</scope>
    <source>
        <strain>ATCC 700860 / DSM 12428 / JCM 9974 / NBRC 100139 / OT-3</strain>
    </source>
</reference>
<accession>O59390</accession>
<feature type="chain" id="PRO_0000140422" description="Homocitrate synthase">
    <location>
        <begin position="1"/>
        <end position="361"/>
    </location>
</feature>
<feature type="domain" description="Pyruvate carboxyltransferase" evidence="3">
    <location>
        <begin position="1"/>
        <end position="249"/>
    </location>
</feature>
<feature type="active site" description="Proton acceptor" evidence="1">
    <location>
        <position position="282"/>
    </location>
</feature>
<feature type="binding site" evidence="1">
    <location>
        <position position="8"/>
    </location>
    <ligand>
        <name>2-oxoglutarate</name>
        <dbReference type="ChEBI" id="CHEBI:16810"/>
    </ligand>
</feature>
<feature type="binding site" evidence="1">
    <location>
        <position position="9"/>
    </location>
    <ligand>
        <name>Mg(2+)</name>
        <dbReference type="ChEBI" id="CHEBI:18420"/>
    </ligand>
</feature>
<feature type="binding site" evidence="1">
    <location>
        <position position="68"/>
    </location>
    <ligand>
        <name>2-oxoglutarate</name>
        <dbReference type="ChEBI" id="CHEBI:16810"/>
    </ligand>
</feature>
<feature type="binding site" evidence="1">
    <location>
        <position position="128"/>
    </location>
    <ligand>
        <name>2-oxoglutarate</name>
        <dbReference type="ChEBI" id="CHEBI:16810"/>
    </ligand>
</feature>
<feature type="binding site" evidence="1">
    <location>
        <position position="162"/>
    </location>
    <ligand>
        <name>2-oxoglutarate</name>
        <dbReference type="ChEBI" id="CHEBI:16810"/>
    </ligand>
</feature>
<feature type="binding site" evidence="1">
    <location>
        <position position="188"/>
    </location>
    <ligand>
        <name>Mg(2+)</name>
        <dbReference type="ChEBI" id="CHEBI:18420"/>
    </ligand>
</feature>
<feature type="binding site" evidence="1">
    <location>
        <position position="190"/>
    </location>
    <ligand>
        <name>Mg(2+)</name>
        <dbReference type="ChEBI" id="CHEBI:18420"/>
    </ligand>
</feature>
<protein>
    <recommendedName>
        <fullName evidence="2">Homocitrate synthase</fullName>
        <shortName evidence="2">HCS</shortName>
        <ecNumber evidence="1 2">2.3.3.14</ecNumber>
    </recommendedName>
</protein>